<keyword id="KW-0963">Cytoplasm</keyword>
<keyword id="KW-0285">Flavoprotein</keyword>
<keyword id="KW-0288">FMN</keyword>
<keyword id="KW-0413">Isomerase</keyword>
<keyword id="KW-0414">Isoprene biosynthesis</keyword>
<keyword id="KW-0460">Magnesium</keyword>
<keyword id="KW-0479">Metal-binding</keyword>
<keyword id="KW-0521">NADP</keyword>
<evidence type="ECO:0000255" key="1">
    <source>
        <dbReference type="HAMAP-Rule" id="MF_00354"/>
    </source>
</evidence>
<protein>
    <recommendedName>
        <fullName evidence="1">Isopentenyl-diphosphate delta-isomerase</fullName>
        <shortName evidence="1">IPP isomerase</shortName>
        <ecNumber evidence="1">5.3.3.2</ecNumber>
    </recommendedName>
    <alternativeName>
        <fullName evidence="1">Isopentenyl diphosphate:dimethylallyl diphosphate isomerase</fullName>
    </alternativeName>
    <alternativeName>
        <fullName evidence="1">Isopentenyl pyrophosphate isomerase</fullName>
    </alternativeName>
    <alternativeName>
        <fullName evidence="1">Type 2 isopentenyl diphosphate isomerase</fullName>
        <shortName evidence="1">IDI-2</shortName>
    </alternativeName>
</protein>
<reference key="1">
    <citation type="submission" date="2007-08" db="EMBL/GenBank/DDBJ databases">
        <authorList>
            <consortium name="The Vibrio harveyi Genome Sequencing Project"/>
            <person name="Bassler B."/>
            <person name="Clifton S.W."/>
            <person name="Fulton L."/>
            <person name="Delehaunty K."/>
            <person name="Fronick C."/>
            <person name="Harrison M."/>
            <person name="Markivic C."/>
            <person name="Fulton R."/>
            <person name="Tin-Wollam A.-M."/>
            <person name="Shah N."/>
            <person name="Pepin K."/>
            <person name="Nash W."/>
            <person name="Thiruvilangam P."/>
            <person name="Bhonagiri V."/>
            <person name="Waters C."/>
            <person name="Tu K.C."/>
            <person name="Irgon J."/>
            <person name="Wilson R.K."/>
        </authorList>
    </citation>
    <scope>NUCLEOTIDE SEQUENCE [LARGE SCALE GENOMIC DNA]</scope>
    <source>
        <strain>ATCC BAA-1116 / BB120</strain>
    </source>
</reference>
<gene>
    <name evidence="1" type="primary">fni</name>
    <name type="ordered locus">VIBHAR_04924</name>
</gene>
<dbReference type="EC" id="5.3.3.2" evidence="1"/>
<dbReference type="EMBL" id="CP000790">
    <property type="protein sequence ID" value="ABU72832.1"/>
    <property type="molecule type" value="Genomic_DNA"/>
</dbReference>
<dbReference type="RefSeq" id="WP_011999214.1">
    <property type="nucleotide sequence ID" value="NC_009784.1"/>
</dbReference>
<dbReference type="SMR" id="A7N787"/>
<dbReference type="KEGG" id="vha:VIBHAR_04924"/>
<dbReference type="PATRIC" id="fig|338187.25.peg.5270"/>
<dbReference type="Proteomes" id="UP000008152">
    <property type="component" value="Chromosome II"/>
</dbReference>
<dbReference type="GO" id="GO:0005737">
    <property type="term" value="C:cytoplasm"/>
    <property type="evidence" value="ECO:0007669"/>
    <property type="project" value="UniProtKB-SubCell"/>
</dbReference>
<dbReference type="GO" id="GO:0010181">
    <property type="term" value="F:FMN binding"/>
    <property type="evidence" value="ECO:0007669"/>
    <property type="project" value="UniProtKB-UniRule"/>
</dbReference>
<dbReference type="GO" id="GO:0004452">
    <property type="term" value="F:isopentenyl-diphosphate delta-isomerase activity"/>
    <property type="evidence" value="ECO:0007669"/>
    <property type="project" value="UniProtKB-UniRule"/>
</dbReference>
<dbReference type="GO" id="GO:0000287">
    <property type="term" value="F:magnesium ion binding"/>
    <property type="evidence" value="ECO:0007669"/>
    <property type="project" value="UniProtKB-UniRule"/>
</dbReference>
<dbReference type="GO" id="GO:0070402">
    <property type="term" value="F:NADPH binding"/>
    <property type="evidence" value="ECO:0007669"/>
    <property type="project" value="UniProtKB-UniRule"/>
</dbReference>
<dbReference type="GO" id="GO:0016491">
    <property type="term" value="F:oxidoreductase activity"/>
    <property type="evidence" value="ECO:0007669"/>
    <property type="project" value="InterPro"/>
</dbReference>
<dbReference type="GO" id="GO:0008299">
    <property type="term" value="P:isoprenoid biosynthetic process"/>
    <property type="evidence" value="ECO:0007669"/>
    <property type="project" value="UniProtKB-UniRule"/>
</dbReference>
<dbReference type="CDD" id="cd02811">
    <property type="entry name" value="IDI-2_FMN"/>
    <property type="match status" value="1"/>
</dbReference>
<dbReference type="Gene3D" id="3.20.20.70">
    <property type="entry name" value="Aldolase class I"/>
    <property type="match status" value="1"/>
</dbReference>
<dbReference type="HAMAP" id="MF_00354">
    <property type="entry name" value="Idi_2"/>
    <property type="match status" value="1"/>
</dbReference>
<dbReference type="InterPro" id="IPR013785">
    <property type="entry name" value="Aldolase_TIM"/>
</dbReference>
<dbReference type="InterPro" id="IPR000262">
    <property type="entry name" value="FMN-dep_DH"/>
</dbReference>
<dbReference type="InterPro" id="IPR011179">
    <property type="entry name" value="IPdP_isomerase"/>
</dbReference>
<dbReference type="NCBIfam" id="TIGR02151">
    <property type="entry name" value="IPP_isom_2"/>
    <property type="match status" value="1"/>
</dbReference>
<dbReference type="PANTHER" id="PTHR43665">
    <property type="entry name" value="ISOPENTENYL-DIPHOSPHATE DELTA-ISOMERASE"/>
    <property type="match status" value="1"/>
</dbReference>
<dbReference type="PANTHER" id="PTHR43665:SF1">
    <property type="entry name" value="ISOPENTENYL-DIPHOSPHATE DELTA-ISOMERASE"/>
    <property type="match status" value="1"/>
</dbReference>
<dbReference type="Pfam" id="PF01070">
    <property type="entry name" value="FMN_dh"/>
    <property type="match status" value="2"/>
</dbReference>
<dbReference type="PIRSF" id="PIRSF003314">
    <property type="entry name" value="IPP_isomerase"/>
    <property type="match status" value="1"/>
</dbReference>
<dbReference type="SUPFAM" id="SSF51395">
    <property type="entry name" value="FMN-linked oxidoreductases"/>
    <property type="match status" value="1"/>
</dbReference>
<sequence length="339" mass="36405">MAPQSNRKDLHLDAVLHHDMNMKSKTAGFESVEFEHCALPECDFNAVDLSSEFLGHSLALPFLISSMTGGAKDAEIINCRLAEAASEMGIAMGVGSQRVSLEDSLHSGLGKTIRDLAKGVPLYSNLGAAQLMDKQRFDNAQRAVDFIQADALFVHLNPMQEAFQQNGDHDWIGVLKSIEQLKQRVDVPMIIKEVGFGISGVVAKQLVEAGVDAIDVAGAGGTSWSAVEGYCQTDNKMQRAAELFRDWGIPTAKCLEQIRGQYPDLPLIASGGVYNGLEAAKAVHLGANLVGQAGAVLKAATISTESIVEHFEQMALELRLACFGTGSANLRALTQARRL</sequence>
<feature type="chain" id="PRO_1000048461" description="Isopentenyl-diphosphate delta-isomerase">
    <location>
        <begin position="1"/>
        <end position="339"/>
    </location>
</feature>
<feature type="binding site" evidence="1">
    <location>
        <begin position="7"/>
        <end position="8"/>
    </location>
    <ligand>
        <name>substrate</name>
    </ligand>
</feature>
<feature type="binding site" evidence="1">
    <location>
        <position position="65"/>
    </location>
    <ligand>
        <name>FMN</name>
        <dbReference type="ChEBI" id="CHEBI:58210"/>
    </ligand>
</feature>
<feature type="binding site" evidence="1">
    <location>
        <begin position="66"/>
        <end position="68"/>
    </location>
    <ligand>
        <name>FMN</name>
        <dbReference type="ChEBI" id="CHEBI:58210"/>
    </ligand>
</feature>
<feature type="binding site" evidence="1">
    <location>
        <begin position="96"/>
        <end position="98"/>
    </location>
    <ligand>
        <name>substrate</name>
    </ligand>
</feature>
<feature type="binding site" evidence="1">
    <location>
        <position position="96"/>
    </location>
    <ligand>
        <name>FMN</name>
        <dbReference type="ChEBI" id="CHEBI:58210"/>
    </ligand>
</feature>
<feature type="binding site" evidence="1">
    <location>
        <position position="125"/>
    </location>
    <ligand>
        <name>FMN</name>
        <dbReference type="ChEBI" id="CHEBI:58210"/>
    </ligand>
</feature>
<feature type="binding site" evidence="1">
    <location>
        <position position="160"/>
    </location>
    <ligand>
        <name>substrate</name>
    </ligand>
</feature>
<feature type="binding site" evidence="1">
    <location>
        <position position="161"/>
    </location>
    <ligand>
        <name>Mg(2+)</name>
        <dbReference type="ChEBI" id="CHEBI:18420"/>
    </ligand>
</feature>
<feature type="binding site" evidence="1">
    <location>
        <position position="192"/>
    </location>
    <ligand>
        <name>FMN</name>
        <dbReference type="ChEBI" id="CHEBI:58210"/>
    </ligand>
</feature>
<feature type="binding site" evidence="1">
    <location>
        <position position="222"/>
    </location>
    <ligand>
        <name>FMN</name>
        <dbReference type="ChEBI" id="CHEBI:58210"/>
    </ligand>
</feature>
<feature type="binding site" evidence="1">
    <location>
        <begin position="293"/>
        <end position="294"/>
    </location>
    <ligand>
        <name>FMN</name>
        <dbReference type="ChEBI" id="CHEBI:58210"/>
    </ligand>
</feature>
<accession>A7N787</accession>
<name>IDI2_VIBC1</name>
<proteinExistence type="inferred from homology"/>
<organism>
    <name type="scientific">Vibrio campbellii (strain ATCC BAA-1116)</name>
    <dbReference type="NCBI Taxonomy" id="2902295"/>
    <lineage>
        <taxon>Bacteria</taxon>
        <taxon>Pseudomonadati</taxon>
        <taxon>Pseudomonadota</taxon>
        <taxon>Gammaproteobacteria</taxon>
        <taxon>Vibrionales</taxon>
        <taxon>Vibrionaceae</taxon>
        <taxon>Vibrio</taxon>
    </lineage>
</organism>
<comment type="function">
    <text evidence="1">Involved in the biosynthesis of isoprenoids. Catalyzes the 1,3-allylic rearrangement of the homoallylic substrate isopentenyl (IPP) to its allylic isomer, dimethylallyl diphosphate (DMAPP).</text>
</comment>
<comment type="catalytic activity">
    <reaction evidence="1">
        <text>isopentenyl diphosphate = dimethylallyl diphosphate</text>
        <dbReference type="Rhea" id="RHEA:23284"/>
        <dbReference type="ChEBI" id="CHEBI:57623"/>
        <dbReference type="ChEBI" id="CHEBI:128769"/>
        <dbReference type="EC" id="5.3.3.2"/>
    </reaction>
</comment>
<comment type="cofactor">
    <cofactor evidence="1">
        <name>FMN</name>
        <dbReference type="ChEBI" id="CHEBI:58210"/>
    </cofactor>
</comment>
<comment type="cofactor">
    <cofactor evidence="1">
        <name>NADPH</name>
        <dbReference type="ChEBI" id="CHEBI:57783"/>
    </cofactor>
</comment>
<comment type="cofactor">
    <cofactor evidence="1">
        <name>Mg(2+)</name>
        <dbReference type="ChEBI" id="CHEBI:18420"/>
    </cofactor>
</comment>
<comment type="subunit">
    <text evidence="1">Homooctamer. Dimer of tetramers.</text>
</comment>
<comment type="subcellular location">
    <subcellularLocation>
        <location evidence="1">Cytoplasm</location>
    </subcellularLocation>
</comment>
<comment type="similarity">
    <text evidence="1">Belongs to the IPP isomerase type 2 family.</text>
</comment>